<accession>Q1C238</accession>
<name>YIHI_YERPA</name>
<gene>
    <name evidence="1" type="primary">yihI</name>
    <name type="ordered locus">YPA_3522</name>
</gene>
<feature type="chain" id="PRO_1000064437" description="Der GTPase-activating protein YihI">
    <location>
        <begin position="1"/>
        <end position="188"/>
    </location>
</feature>
<feature type="region of interest" description="Disordered" evidence="2">
    <location>
        <begin position="1"/>
        <end position="80"/>
    </location>
</feature>
<feature type="region of interest" description="Disordered" evidence="2">
    <location>
        <begin position="162"/>
        <end position="188"/>
    </location>
</feature>
<feature type="compositionally biased region" description="Basic and acidic residues" evidence="2">
    <location>
        <begin position="27"/>
        <end position="37"/>
    </location>
</feature>
<feature type="compositionally biased region" description="Polar residues" evidence="2">
    <location>
        <begin position="47"/>
        <end position="57"/>
    </location>
</feature>
<comment type="function">
    <text evidence="1">A GTPase-activating protein (GAP) that modifies Der/EngA GTPase function. May play a role in ribosome biogenesis.</text>
</comment>
<comment type="subunit">
    <text evidence="1">Interacts with Der.</text>
</comment>
<comment type="similarity">
    <text evidence="1">Belongs to the YihI family.</text>
</comment>
<organism>
    <name type="scientific">Yersinia pestis bv. Antiqua (strain Antiqua)</name>
    <dbReference type="NCBI Taxonomy" id="360102"/>
    <lineage>
        <taxon>Bacteria</taxon>
        <taxon>Pseudomonadati</taxon>
        <taxon>Pseudomonadota</taxon>
        <taxon>Gammaproteobacteria</taxon>
        <taxon>Enterobacterales</taxon>
        <taxon>Yersiniaceae</taxon>
        <taxon>Yersinia</taxon>
    </lineage>
</organism>
<protein>
    <recommendedName>
        <fullName evidence="1">Der GTPase-activating protein YihI</fullName>
    </recommendedName>
</protein>
<proteinExistence type="inferred from homology"/>
<sequence>MKQPNKAPRANIAAPKGTATPKRRRKTRDELDAEARDRKRQKKHSGNRSGARTNVEGSNKKGHSQTQEKDPRVGSKVPVPLVIESQVKAKSMPKPVEKNVVKPRLTPEEELAKLENDERLDALLDRLDNDEVLNKEDQAYVDLTLDRIDALMEQLGIELGDDEDDVEREEKQEDILQLLKRGNPKDTF</sequence>
<dbReference type="EMBL" id="CP000308">
    <property type="protein sequence ID" value="ABG15484.1"/>
    <property type="molecule type" value="Genomic_DNA"/>
</dbReference>
<dbReference type="RefSeq" id="WP_002213158.1">
    <property type="nucleotide sequence ID" value="NZ_CP009906.1"/>
</dbReference>
<dbReference type="SMR" id="Q1C238"/>
<dbReference type="GeneID" id="57974569"/>
<dbReference type="KEGG" id="ypa:YPA_3522"/>
<dbReference type="Proteomes" id="UP000001971">
    <property type="component" value="Chromosome"/>
</dbReference>
<dbReference type="GO" id="GO:0005096">
    <property type="term" value="F:GTPase activator activity"/>
    <property type="evidence" value="ECO:0007669"/>
    <property type="project" value="UniProtKB-KW"/>
</dbReference>
<dbReference type="GO" id="GO:0042254">
    <property type="term" value="P:ribosome biogenesis"/>
    <property type="evidence" value="ECO:0007669"/>
    <property type="project" value="UniProtKB-KW"/>
</dbReference>
<dbReference type="HAMAP" id="MF_01058">
    <property type="entry name" value="GAP_YihI"/>
    <property type="match status" value="1"/>
</dbReference>
<dbReference type="InterPro" id="IPR007336">
    <property type="entry name" value="YihI"/>
</dbReference>
<dbReference type="NCBIfam" id="NF003560">
    <property type="entry name" value="PRK05244.1-1"/>
    <property type="match status" value="1"/>
</dbReference>
<dbReference type="Pfam" id="PF04220">
    <property type="entry name" value="YihI"/>
    <property type="match status" value="1"/>
</dbReference>
<keyword id="KW-0343">GTPase activation</keyword>
<keyword id="KW-0690">Ribosome biogenesis</keyword>
<evidence type="ECO:0000255" key="1">
    <source>
        <dbReference type="HAMAP-Rule" id="MF_01058"/>
    </source>
</evidence>
<evidence type="ECO:0000256" key="2">
    <source>
        <dbReference type="SAM" id="MobiDB-lite"/>
    </source>
</evidence>
<reference key="1">
    <citation type="journal article" date="2006" name="J. Bacteriol.">
        <title>Complete genome sequence of Yersinia pestis strains Antiqua and Nepal516: evidence of gene reduction in an emerging pathogen.</title>
        <authorList>
            <person name="Chain P.S.G."/>
            <person name="Hu P."/>
            <person name="Malfatti S.A."/>
            <person name="Radnedge L."/>
            <person name="Larimer F."/>
            <person name="Vergez L.M."/>
            <person name="Worsham P."/>
            <person name="Chu M.C."/>
            <person name="Andersen G.L."/>
        </authorList>
    </citation>
    <scope>NUCLEOTIDE SEQUENCE [LARGE SCALE GENOMIC DNA]</scope>
    <source>
        <strain>Antiqua</strain>
    </source>
</reference>